<evidence type="ECO:0000255" key="1">
    <source>
        <dbReference type="HAMAP-Rule" id="MF_00072"/>
    </source>
</evidence>
<organism>
    <name type="scientific">Francisella tularensis subsp. holarctica (strain LVS)</name>
    <dbReference type="NCBI Taxonomy" id="376619"/>
    <lineage>
        <taxon>Bacteria</taxon>
        <taxon>Pseudomonadati</taxon>
        <taxon>Pseudomonadota</taxon>
        <taxon>Gammaproteobacteria</taxon>
        <taxon>Thiotrichales</taxon>
        <taxon>Francisellaceae</taxon>
        <taxon>Francisella</taxon>
    </lineage>
</organism>
<accession>Q2A1V8</accession>
<sequence>MSEYLQQIAKRRTFAIISHPDAGKTTITEKMLLFGNAIKTAGTVKAKKSGIHATSDWMEMEKQRGISITTSVMQFPYNGRIINLLDTPGHEDFSEDTYRTLTAVDSALMVVDAVKGVEDRTIKLMNVCRLRDTPIVTFMNKFDRDTRDPLELLDEVENILKIKCAPMNWPIGMGKYFKGVYDLYNDEVTLFETGHGHEIYPYKKIKGLANAKDSIGIDLYEDLEMEIDLVRGASHEFDEQEFLEGNLTPVYFGTALSNFGVKEMMDGFTRYAPAPQHREADQRVVAADEQKLTGFVFKIQANMDEKHRNRIAFFRICSGKYEKGMKIFHERTGKQMQISKALTFMAGEREQVEEGYAGDIIGLHNHGSIQIGDSFTQGEKLKFKGIPNFAPEIFKRVKLNDPLKMKALQKGLVQLSEEGATQVFKPFISNDLVLGAVGVLQFDVVAQRLASEYNVKCSYEGVNVTLARWIFCNDEKKLNDFKKKYEVNLAYDGAGYLTYLAPTGVNLQLAQEKNPDIIFSATREH</sequence>
<reference key="1">
    <citation type="submission" date="2006-03" db="EMBL/GenBank/DDBJ databases">
        <title>Complete genome sequence of Francisella tularensis LVS (Live Vaccine Strain).</title>
        <authorList>
            <person name="Chain P."/>
            <person name="Larimer F."/>
            <person name="Land M."/>
            <person name="Stilwagen S."/>
            <person name="Larsson P."/>
            <person name="Bearden S."/>
            <person name="Chu M."/>
            <person name="Oyston P."/>
            <person name="Forsman M."/>
            <person name="Andersson S."/>
            <person name="Lindler L."/>
            <person name="Titball R."/>
            <person name="Garcia E."/>
        </authorList>
    </citation>
    <scope>NUCLEOTIDE SEQUENCE [LARGE SCALE GENOMIC DNA]</scope>
    <source>
        <strain>LVS</strain>
    </source>
</reference>
<keyword id="KW-0963">Cytoplasm</keyword>
<keyword id="KW-0342">GTP-binding</keyword>
<keyword id="KW-0547">Nucleotide-binding</keyword>
<keyword id="KW-0648">Protein biosynthesis</keyword>
<keyword id="KW-1185">Reference proteome</keyword>
<protein>
    <recommendedName>
        <fullName evidence="1">Peptide chain release factor 3</fullName>
        <shortName evidence="1">RF-3</shortName>
    </recommendedName>
</protein>
<name>RF3_FRATH</name>
<feature type="chain" id="PRO_0000242177" description="Peptide chain release factor 3">
    <location>
        <begin position="1"/>
        <end position="525"/>
    </location>
</feature>
<feature type="domain" description="tr-type G">
    <location>
        <begin position="9"/>
        <end position="276"/>
    </location>
</feature>
<feature type="binding site" evidence="1">
    <location>
        <begin position="18"/>
        <end position="25"/>
    </location>
    <ligand>
        <name>GTP</name>
        <dbReference type="ChEBI" id="CHEBI:37565"/>
    </ligand>
</feature>
<feature type="binding site" evidence="1">
    <location>
        <begin position="86"/>
        <end position="90"/>
    </location>
    <ligand>
        <name>GTP</name>
        <dbReference type="ChEBI" id="CHEBI:37565"/>
    </ligand>
</feature>
<feature type="binding site" evidence="1">
    <location>
        <begin position="140"/>
        <end position="143"/>
    </location>
    <ligand>
        <name>GTP</name>
        <dbReference type="ChEBI" id="CHEBI:37565"/>
    </ligand>
</feature>
<gene>
    <name evidence="1" type="primary">prfC</name>
    <name type="ordered locus">FTL_1659</name>
</gene>
<dbReference type="EMBL" id="AM233362">
    <property type="protein sequence ID" value="CAJ80098.1"/>
    <property type="molecule type" value="Genomic_DNA"/>
</dbReference>
<dbReference type="RefSeq" id="WP_003017082.1">
    <property type="nucleotide sequence ID" value="NZ_CP009694.1"/>
</dbReference>
<dbReference type="SMR" id="Q2A1V8"/>
<dbReference type="KEGG" id="ftl:FTL_1659"/>
<dbReference type="Proteomes" id="UP000001944">
    <property type="component" value="Chromosome"/>
</dbReference>
<dbReference type="GO" id="GO:0005829">
    <property type="term" value="C:cytosol"/>
    <property type="evidence" value="ECO:0007669"/>
    <property type="project" value="TreeGrafter"/>
</dbReference>
<dbReference type="GO" id="GO:0005525">
    <property type="term" value="F:GTP binding"/>
    <property type="evidence" value="ECO:0007669"/>
    <property type="project" value="UniProtKB-UniRule"/>
</dbReference>
<dbReference type="GO" id="GO:0003924">
    <property type="term" value="F:GTPase activity"/>
    <property type="evidence" value="ECO:0007669"/>
    <property type="project" value="InterPro"/>
</dbReference>
<dbReference type="GO" id="GO:0097216">
    <property type="term" value="F:guanosine tetraphosphate binding"/>
    <property type="evidence" value="ECO:0007669"/>
    <property type="project" value="UniProtKB-ARBA"/>
</dbReference>
<dbReference type="GO" id="GO:0016150">
    <property type="term" value="F:translation release factor activity, codon nonspecific"/>
    <property type="evidence" value="ECO:0007669"/>
    <property type="project" value="TreeGrafter"/>
</dbReference>
<dbReference type="GO" id="GO:0016149">
    <property type="term" value="F:translation release factor activity, codon specific"/>
    <property type="evidence" value="ECO:0007669"/>
    <property type="project" value="UniProtKB-UniRule"/>
</dbReference>
<dbReference type="GO" id="GO:0006449">
    <property type="term" value="P:regulation of translational termination"/>
    <property type="evidence" value="ECO:0007669"/>
    <property type="project" value="UniProtKB-UniRule"/>
</dbReference>
<dbReference type="CDD" id="cd04169">
    <property type="entry name" value="RF3"/>
    <property type="match status" value="1"/>
</dbReference>
<dbReference type="CDD" id="cd16259">
    <property type="entry name" value="RF3_III"/>
    <property type="match status" value="1"/>
</dbReference>
<dbReference type="FunFam" id="2.40.30.10:FF:000040">
    <property type="entry name" value="Peptide chain release factor 3"/>
    <property type="match status" value="1"/>
</dbReference>
<dbReference type="FunFam" id="3.30.70.3280:FF:000001">
    <property type="entry name" value="Peptide chain release factor 3"/>
    <property type="match status" value="1"/>
</dbReference>
<dbReference type="FunFam" id="3.40.50.300:FF:000542">
    <property type="entry name" value="Peptide chain release factor 3"/>
    <property type="match status" value="1"/>
</dbReference>
<dbReference type="Gene3D" id="3.40.50.300">
    <property type="entry name" value="P-loop containing nucleotide triphosphate hydrolases"/>
    <property type="match status" value="1"/>
</dbReference>
<dbReference type="Gene3D" id="3.30.70.3280">
    <property type="entry name" value="Peptide chain release factor 3, domain III"/>
    <property type="match status" value="1"/>
</dbReference>
<dbReference type="Gene3D" id="2.40.30.10">
    <property type="entry name" value="Translation factors"/>
    <property type="match status" value="1"/>
</dbReference>
<dbReference type="HAMAP" id="MF_00072">
    <property type="entry name" value="Rel_fac_3"/>
    <property type="match status" value="1"/>
</dbReference>
<dbReference type="InterPro" id="IPR053905">
    <property type="entry name" value="EF-G-like_DII"/>
</dbReference>
<dbReference type="InterPro" id="IPR035647">
    <property type="entry name" value="EFG_III/V"/>
</dbReference>
<dbReference type="InterPro" id="IPR031157">
    <property type="entry name" value="G_TR_CS"/>
</dbReference>
<dbReference type="InterPro" id="IPR027417">
    <property type="entry name" value="P-loop_NTPase"/>
</dbReference>
<dbReference type="InterPro" id="IPR004548">
    <property type="entry name" value="PrfC"/>
</dbReference>
<dbReference type="InterPro" id="IPR032090">
    <property type="entry name" value="RF3_C"/>
</dbReference>
<dbReference type="InterPro" id="IPR038467">
    <property type="entry name" value="RF3_dom_3_sf"/>
</dbReference>
<dbReference type="InterPro" id="IPR041732">
    <property type="entry name" value="RF3_GTP-bd"/>
</dbReference>
<dbReference type="InterPro" id="IPR005225">
    <property type="entry name" value="Small_GTP-bd"/>
</dbReference>
<dbReference type="InterPro" id="IPR000795">
    <property type="entry name" value="T_Tr_GTP-bd_dom"/>
</dbReference>
<dbReference type="InterPro" id="IPR009000">
    <property type="entry name" value="Transl_B-barrel_sf"/>
</dbReference>
<dbReference type="NCBIfam" id="TIGR00503">
    <property type="entry name" value="prfC"/>
    <property type="match status" value="1"/>
</dbReference>
<dbReference type="NCBIfam" id="NF001964">
    <property type="entry name" value="PRK00741.1"/>
    <property type="match status" value="1"/>
</dbReference>
<dbReference type="NCBIfam" id="TIGR00231">
    <property type="entry name" value="small_GTP"/>
    <property type="match status" value="1"/>
</dbReference>
<dbReference type="PANTHER" id="PTHR43556">
    <property type="entry name" value="PEPTIDE CHAIN RELEASE FACTOR RF3"/>
    <property type="match status" value="1"/>
</dbReference>
<dbReference type="PANTHER" id="PTHR43556:SF2">
    <property type="entry name" value="PEPTIDE CHAIN RELEASE FACTOR RF3"/>
    <property type="match status" value="1"/>
</dbReference>
<dbReference type="Pfam" id="PF22042">
    <property type="entry name" value="EF-G_D2"/>
    <property type="match status" value="1"/>
</dbReference>
<dbReference type="Pfam" id="PF00009">
    <property type="entry name" value="GTP_EFTU"/>
    <property type="match status" value="1"/>
</dbReference>
<dbReference type="Pfam" id="PF16658">
    <property type="entry name" value="RF3_C"/>
    <property type="match status" value="1"/>
</dbReference>
<dbReference type="PRINTS" id="PR00315">
    <property type="entry name" value="ELONGATNFCT"/>
</dbReference>
<dbReference type="SUPFAM" id="SSF54980">
    <property type="entry name" value="EF-G C-terminal domain-like"/>
    <property type="match status" value="1"/>
</dbReference>
<dbReference type="SUPFAM" id="SSF52540">
    <property type="entry name" value="P-loop containing nucleoside triphosphate hydrolases"/>
    <property type="match status" value="1"/>
</dbReference>
<dbReference type="SUPFAM" id="SSF50447">
    <property type="entry name" value="Translation proteins"/>
    <property type="match status" value="1"/>
</dbReference>
<dbReference type="PROSITE" id="PS00301">
    <property type="entry name" value="G_TR_1"/>
    <property type="match status" value="1"/>
</dbReference>
<dbReference type="PROSITE" id="PS51722">
    <property type="entry name" value="G_TR_2"/>
    <property type="match status" value="1"/>
</dbReference>
<comment type="function">
    <text evidence="1">Increases the formation of ribosomal termination complexes and stimulates activities of RF-1 and RF-2. It binds guanine nucleotides and has strong preference for UGA stop codons. It may interact directly with the ribosome. The stimulation of RF-1 and RF-2 is significantly reduced by GTP and GDP, but not by GMP.</text>
</comment>
<comment type="subcellular location">
    <subcellularLocation>
        <location evidence="1">Cytoplasm</location>
    </subcellularLocation>
</comment>
<comment type="similarity">
    <text evidence="1">Belongs to the TRAFAC class translation factor GTPase superfamily. Classic translation factor GTPase family. PrfC subfamily.</text>
</comment>
<proteinExistence type="inferred from homology"/>